<protein>
    <recommendedName>
        <fullName evidence="1">D-tagatose-1,6-bisphosphate aldolase subunit KbaZ</fullName>
    </recommendedName>
</protein>
<accession>B7N362</accession>
<name>KBAZ_ECO81</name>
<reference key="1">
    <citation type="journal article" date="2009" name="PLoS Genet.">
        <title>Organised genome dynamics in the Escherichia coli species results in highly diverse adaptive paths.</title>
        <authorList>
            <person name="Touchon M."/>
            <person name="Hoede C."/>
            <person name="Tenaillon O."/>
            <person name="Barbe V."/>
            <person name="Baeriswyl S."/>
            <person name="Bidet P."/>
            <person name="Bingen E."/>
            <person name="Bonacorsi S."/>
            <person name="Bouchier C."/>
            <person name="Bouvet O."/>
            <person name="Calteau A."/>
            <person name="Chiapello H."/>
            <person name="Clermont O."/>
            <person name="Cruveiller S."/>
            <person name="Danchin A."/>
            <person name="Diard M."/>
            <person name="Dossat C."/>
            <person name="Karoui M.E."/>
            <person name="Frapy E."/>
            <person name="Garry L."/>
            <person name="Ghigo J.M."/>
            <person name="Gilles A.M."/>
            <person name="Johnson J."/>
            <person name="Le Bouguenec C."/>
            <person name="Lescat M."/>
            <person name="Mangenot S."/>
            <person name="Martinez-Jehanne V."/>
            <person name="Matic I."/>
            <person name="Nassif X."/>
            <person name="Oztas S."/>
            <person name="Petit M.A."/>
            <person name="Pichon C."/>
            <person name="Rouy Z."/>
            <person name="Ruf C.S."/>
            <person name="Schneider D."/>
            <person name="Tourret J."/>
            <person name="Vacherie B."/>
            <person name="Vallenet D."/>
            <person name="Medigue C."/>
            <person name="Rocha E.P.C."/>
            <person name="Denamur E."/>
        </authorList>
    </citation>
    <scope>NUCLEOTIDE SEQUENCE [LARGE SCALE GENOMIC DNA]</scope>
    <source>
        <strain>ED1a</strain>
    </source>
</reference>
<sequence>MKHLTEMVRQHKAGKTNGIYAVCSAHPLVLEAAIRYASANQTPLLIEATSNQVDQFGGYTGMTPADFRGFVCQLADSLNFPQDALILGGDHLGPNRWQNLPAAQAMANADDLIKSYVAAGFKKIHLDCSMSCQDDPIPLTDDIVAERAARLAKVAEETCREHFGEADLEYVIGTEVPVPGGAHETLSELAVTTPDAARATLEAHRHAFEKQGLNAIWPRIIALVVQPGVEFDHTNVIDYQSAKATALSQMVENYETLIFEAHSTDYQTPQSLRQLVIDHFAILKVGPALTFALREALFSLAAIEEELVPAKACSGLRQVLENVMLDRPEYWQSHYHGDGNARRLARGYSYSDRVRYYWPDSQIDDAFAHLVRNLADSPIPLPLISQYLPLQYVKVRSGELQPTPRELIINHIQDILAQYHTACEGQ</sequence>
<dbReference type="EMBL" id="CU928162">
    <property type="protein sequence ID" value="CAV17947.1"/>
    <property type="molecule type" value="Genomic_DNA"/>
</dbReference>
<dbReference type="RefSeq" id="WP_000681937.1">
    <property type="nucleotide sequence ID" value="NC_011745.1"/>
</dbReference>
<dbReference type="SMR" id="B7N362"/>
<dbReference type="KEGG" id="ecq:ECED1_3794"/>
<dbReference type="HOGENOM" id="CLU_053334_0_0_6"/>
<dbReference type="UniPathway" id="UPA00704">
    <property type="reaction ID" value="UER00716"/>
</dbReference>
<dbReference type="Proteomes" id="UP000000748">
    <property type="component" value="Chromosome"/>
</dbReference>
<dbReference type="GO" id="GO:0005886">
    <property type="term" value="C:plasma membrane"/>
    <property type="evidence" value="ECO:0007669"/>
    <property type="project" value="TreeGrafter"/>
</dbReference>
<dbReference type="GO" id="GO:0005975">
    <property type="term" value="P:carbohydrate metabolic process"/>
    <property type="evidence" value="ECO:0007669"/>
    <property type="project" value="InterPro"/>
</dbReference>
<dbReference type="GO" id="GO:2001059">
    <property type="term" value="P:D-tagatose 6-phosphate catabolic process"/>
    <property type="evidence" value="ECO:0007669"/>
    <property type="project" value="UniProtKB-UniRule"/>
</dbReference>
<dbReference type="GO" id="GO:0009401">
    <property type="term" value="P:phosphoenolpyruvate-dependent sugar phosphotransferase system"/>
    <property type="evidence" value="ECO:0007669"/>
    <property type="project" value="TreeGrafter"/>
</dbReference>
<dbReference type="Gene3D" id="3.20.20.70">
    <property type="entry name" value="Aldolase class I"/>
    <property type="match status" value="1"/>
</dbReference>
<dbReference type="Gene3D" id="1.10.400.20">
    <property type="entry name" value="putative tagatose 6-phosphate kinase domain like"/>
    <property type="match status" value="1"/>
</dbReference>
<dbReference type="HAMAP" id="MF_01295">
    <property type="entry name" value="Tagatose_aldol_KbaZ"/>
    <property type="match status" value="1"/>
</dbReference>
<dbReference type="InterPro" id="IPR013785">
    <property type="entry name" value="Aldolase_TIM"/>
</dbReference>
<dbReference type="InterPro" id="IPR012062">
    <property type="entry name" value="GatZ/KbaZ-like"/>
</dbReference>
<dbReference type="InterPro" id="IPR050303">
    <property type="entry name" value="GatZ_KbaZ_carbometab"/>
</dbReference>
<dbReference type="InterPro" id="IPR023435">
    <property type="entry name" value="TagBP_ald_KbaZ"/>
</dbReference>
<dbReference type="NCBIfam" id="TIGR02810">
    <property type="entry name" value="agaZ_gatZ"/>
    <property type="match status" value="1"/>
</dbReference>
<dbReference type="NCBIfam" id="NF012002">
    <property type="entry name" value="PRK15458.1"/>
    <property type="match status" value="1"/>
</dbReference>
<dbReference type="PANTHER" id="PTHR32502:SF2">
    <property type="entry name" value="D-TAGATOSE-1,6-BISPHOSPHATE ALDOLASE SUBUNIT KBAZ"/>
    <property type="match status" value="1"/>
</dbReference>
<dbReference type="PANTHER" id="PTHR32502">
    <property type="entry name" value="N-ACETYLGALACTOSAMINE PERMEASE II COMPONENT-RELATED"/>
    <property type="match status" value="1"/>
</dbReference>
<dbReference type="Pfam" id="PF08013">
    <property type="entry name" value="GatZ_KbaZ-like"/>
    <property type="match status" value="1"/>
</dbReference>
<dbReference type="PIRSF" id="PIRSF009264">
    <property type="entry name" value="TagBP_ald_AgaZ"/>
    <property type="match status" value="1"/>
</dbReference>
<dbReference type="SUPFAM" id="SSF51569">
    <property type="entry name" value="Aldolase"/>
    <property type="match status" value="1"/>
</dbReference>
<evidence type="ECO:0000255" key="1">
    <source>
        <dbReference type="HAMAP-Rule" id="MF_01295"/>
    </source>
</evidence>
<gene>
    <name evidence="1" type="primary">kbaZ</name>
    <name type="ordered locus">ECED1_3794</name>
</gene>
<proteinExistence type="inferred from homology"/>
<comment type="function">
    <text evidence="1">Component of the tagatose-1,6-bisphosphate aldolase KbaYZ that is required for full activity and stability of the Y subunit. Could have a chaperone-like function for the proper and stable folding of KbaY. When expressed alone, KbaZ does not show any aldolase activity.</text>
</comment>
<comment type="pathway">
    <text evidence="1">Carbohydrate metabolism; D-tagatose 6-phosphate degradation; D-glyceraldehyde 3-phosphate and glycerone phosphate from D-tagatose 6-phosphate: step 2/2.</text>
</comment>
<comment type="subunit">
    <text evidence="1">Forms a complex with KbaY.</text>
</comment>
<comment type="similarity">
    <text evidence="1">Belongs to the GatZ/KbaZ family. KbaZ subfamily.</text>
</comment>
<organism>
    <name type="scientific">Escherichia coli O81 (strain ED1a)</name>
    <dbReference type="NCBI Taxonomy" id="585397"/>
    <lineage>
        <taxon>Bacteria</taxon>
        <taxon>Pseudomonadati</taxon>
        <taxon>Pseudomonadota</taxon>
        <taxon>Gammaproteobacteria</taxon>
        <taxon>Enterobacterales</taxon>
        <taxon>Enterobacteriaceae</taxon>
        <taxon>Escherichia</taxon>
    </lineage>
</organism>
<feature type="chain" id="PRO_0000372541" description="D-tagatose-1,6-bisphosphate aldolase subunit KbaZ">
    <location>
        <begin position="1"/>
        <end position="426"/>
    </location>
</feature>